<name>RSMG_MANSM</name>
<keyword id="KW-0963">Cytoplasm</keyword>
<keyword id="KW-0489">Methyltransferase</keyword>
<keyword id="KW-0698">rRNA processing</keyword>
<keyword id="KW-0949">S-adenosyl-L-methionine</keyword>
<keyword id="KW-0808">Transferase</keyword>
<comment type="function">
    <text evidence="1">Specifically methylates the N7 position of guanine in position 527 of 16S rRNA.</text>
</comment>
<comment type="catalytic activity">
    <reaction evidence="1">
        <text>guanosine(527) in 16S rRNA + S-adenosyl-L-methionine = N(7)-methylguanosine(527) in 16S rRNA + S-adenosyl-L-homocysteine</text>
        <dbReference type="Rhea" id="RHEA:42732"/>
        <dbReference type="Rhea" id="RHEA-COMP:10209"/>
        <dbReference type="Rhea" id="RHEA-COMP:10210"/>
        <dbReference type="ChEBI" id="CHEBI:57856"/>
        <dbReference type="ChEBI" id="CHEBI:59789"/>
        <dbReference type="ChEBI" id="CHEBI:74269"/>
        <dbReference type="ChEBI" id="CHEBI:74480"/>
        <dbReference type="EC" id="2.1.1.170"/>
    </reaction>
</comment>
<comment type="subcellular location">
    <subcellularLocation>
        <location evidence="1">Cytoplasm</location>
    </subcellularLocation>
</comment>
<comment type="similarity">
    <text evidence="1">Belongs to the methyltransferase superfamily. RNA methyltransferase RsmG family.</text>
</comment>
<reference key="1">
    <citation type="journal article" date="2004" name="Nat. Biotechnol.">
        <title>The genome sequence of the capnophilic rumen bacterium Mannheimia succiniciproducens.</title>
        <authorList>
            <person name="Hong S.H."/>
            <person name="Kim J.S."/>
            <person name="Lee S.Y."/>
            <person name="In Y.H."/>
            <person name="Choi S.S."/>
            <person name="Rih J.-K."/>
            <person name="Kim C.H."/>
            <person name="Jeong H."/>
            <person name="Hur C.G."/>
            <person name="Kim J.J."/>
        </authorList>
    </citation>
    <scope>NUCLEOTIDE SEQUENCE [LARGE SCALE GENOMIC DNA]</scope>
    <source>
        <strain>KCTC 0769BP / MBEL55E</strain>
    </source>
</reference>
<feature type="chain" id="PRO_0000184277" description="Ribosomal RNA small subunit methyltransferase G">
    <location>
        <begin position="1"/>
        <end position="213"/>
    </location>
</feature>
<feature type="binding site" evidence="1">
    <location>
        <position position="81"/>
    </location>
    <ligand>
        <name>S-adenosyl-L-methionine</name>
        <dbReference type="ChEBI" id="CHEBI:59789"/>
    </ligand>
</feature>
<feature type="binding site" evidence="1">
    <location>
        <position position="86"/>
    </location>
    <ligand>
        <name>S-adenosyl-L-methionine</name>
        <dbReference type="ChEBI" id="CHEBI:59789"/>
    </ligand>
</feature>
<feature type="binding site" evidence="1">
    <location>
        <begin position="132"/>
        <end position="133"/>
    </location>
    <ligand>
        <name>S-adenosyl-L-methionine</name>
        <dbReference type="ChEBI" id="CHEBI:59789"/>
    </ligand>
</feature>
<feature type="binding site" evidence="1">
    <location>
        <position position="147"/>
    </location>
    <ligand>
        <name>S-adenosyl-L-methionine</name>
        <dbReference type="ChEBI" id="CHEBI:59789"/>
    </ligand>
</feature>
<organism>
    <name type="scientific">Mannheimia succiniciproducens (strain KCTC 0769BP / MBEL55E)</name>
    <dbReference type="NCBI Taxonomy" id="221988"/>
    <lineage>
        <taxon>Bacteria</taxon>
        <taxon>Pseudomonadati</taxon>
        <taxon>Pseudomonadota</taxon>
        <taxon>Gammaproteobacteria</taxon>
        <taxon>Pasteurellales</taxon>
        <taxon>Pasteurellaceae</taxon>
        <taxon>Basfia</taxon>
    </lineage>
</organism>
<protein>
    <recommendedName>
        <fullName evidence="1">Ribosomal RNA small subunit methyltransferase G</fullName>
        <ecNumber evidence="1">2.1.1.170</ecNumber>
    </recommendedName>
    <alternativeName>
        <fullName evidence="1">16S rRNA 7-methylguanosine methyltransferase</fullName>
        <shortName evidence="1">16S rRNA m7G methyltransferase</shortName>
    </alternativeName>
</protein>
<dbReference type="EC" id="2.1.1.170" evidence="1"/>
<dbReference type="EMBL" id="AE016827">
    <property type="protein sequence ID" value="AAU38960.1"/>
    <property type="molecule type" value="Genomic_DNA"/>
</dbReference>
<dbReference type="SMR" id="Q65Q00"/>
<dbReference type="STRING" id="221988.MS2353"/>
<dbReference type="KEGG" id="msu:MS2353"/>
<dbReference type="eggNOG" id="COG0357">
    <property type="taxonomic scope" value="Bacteria"/>
</dbReference>
<dbReference type="HOGENOM" id="CLU_065341_2_0_6"/>
<dbReference type="Proteomes" id="UP000000607">
    <property type="component" value="Chromosome"/>
</dbReference>
<dbReference type="GO" id="GO:0005829">
    <property type="term" value="C:cytosol"/>
    <property type="evidence" value="ECO:0007669"/>
    <property type="project" value="TreeGrafter"/>
</dbReference>
<dbReference type="GO" id="GO:0070043">
    <property type="term" value="F:rRNA (guanine-N7-)-methyltransferase activity"/>
    <property type="evidence" value="ECO:0007669"/>
    <property type="project" value="UniProtKB-UniRule"/>
</dbReference>
<dbReference type="CDD" id="cd02440">
    <property type="entry name" value="AdoMet_MTases"/>
    <property type="match status" value="1"/>
</dbReference>
<dbReference type="Gene3D" id="3.40.50.150">
    <property type="entry name" value="Vaccinia Virus protein VP39"/>
    <property type="match status" value="1"/>
</dbReference>
<dbReference type="HAMAP" id="MF_00074">
    <property type="entry name" value="16SrRNA_methyltr_G"/>
    <property type="match status" value="1"/>
</dbReference>
<dbReference type="InterPro" id="IPR003682">
    <property type="entry name" value="rRNA_ssu_MeTfrase_G"/>
</dbReference>
<dbReference type="InterPro" id="IPR029063">
    <property type="entry name" value="SAM-dependent_MTases_sf"/>
</dbReference>
<dbReference type="NCBIfam" id="TIGR00138">
    <property type="entry name" value="rsmG_gidB"/>
    <property type="match status" value="1"/>
</dbReference>
<dbReference type="PANTHER" id="PTHR31760">
    <property type="entry name" value="S-ADENOSYL-L-METHIONINE-DEPENDENT METHYLTRANSFERASES SUPERFAMILY PROTEIN"/>
    <property type="match status" value="1"/>
</dbReference>
<dbReference type="PANTHER" id="PTHR31760:SF0">
    <property type="entry name" value="S-ADENOSYL-L-METHIONINE-DEPENDENT METHYLTRANSFERASES SUPERFAMILY PROTEIN"/>
    <property type="match status" value="1"/>
</dbReference>
<dbReference type="Pfam" id="PF02527">
    <property type="entry name" value="GidB"/>
    <property type="match status" value="1"/>
</dbReference>
<dbReference type="PIRSF" id="PIRSF003078">
    <property type="entry name" value="GidB"/>
    <property type="match status" value="1"/>
</dbReference>
<dbReference type="SUPFAM" id="SSF53335">
    <property type="entry name" value="S-adenosyl-L-methionine-dependent methyltransferases"/>
    <property type="match status" value="1"/>
</dbReference>
<sequence>MVNKLEQELTQKLEILLKQTALSISDQQKNKLVQLVLLLNKWNKAYNLTSVRDPMEMLIKHILDSVVVSPYLQGDLFIDVGTGPGLPGLPLAIINPDKNFVLLDSLGKRISFIRNAVRELELSNVVPVLSRVEEYIPDHKFDGILSRAFAILKDMTDWCHHLPNEKGLFYALKGVYQQEEVMDMSNNFQVIDVIKLHVPELIGERHLVKVKKM</sequence>
<accession>Q65Q00</accession>
<proteinExistence type="inferred from homology"/>
<evidence type="ECO:0000255" key="1">
    <source>
        <dbReference type="HAMAP-Rule" id="MF_00074"/>
    </source>
</evidence>
<gene>
    <name evidence="1" type="primary">rsmG</name>
    <name type="ordered locus">MS2353</name>
</gene>